<proteinExistence type="evidence at protein level"/>
<dbReference type="EC" id="3.1.1.4"/>
<dbReference type="SMR" id="P84397"/>
<dbReference type="GO" id="GO:0005576">
    <property type="term" value="C:extracellular region"/>
    <property type="evidence" value="ECO:0007669"/>
    <property type="project" value="UniProtKB-SubCell"/>
</dbReference>
<dbReference type="GO" id="GO:0005509">
    <property type="term" value="F:calcium ion binding"/>
    <property type="evidence" value="ECO:0007669"/>
    <property type="project" value="InterPro"/>
</dbReference>
<dbReference type="GO" id="GO:0047498">
    <property type="term" value="F:calcium-dependent phospholipase A2 activity"/>
    <property type="evidence" value="ECO:0007669"/>
    <property type="project" value="TreeGrafter"/>
</dbReference>
<dbReference type="GO" id="GO:0005543">
    <property type="term" value="F:phospholipid binding"/>
    <property type="evidence" value="ECO:0007669"/>
    <property type="project" value="TreeGrafter"/>
</dbReference>
<dbReference type="GO" id="GO:0090729">
    <property type="term" value="F:toxin activity"/>
    <property type="evidence" value="ECO:0007669"/>
    <property type="project" value="UniProtKB-KW"/>
</dbReference>
<dbReference type="GO" id="GO:0050482">
    <property type="term" value="P:arachidonate secretion"/>
    <property type="evidence" value="ECO:0007669"/>
    <property type="project" value="InterPro"/>
</dbReference>
<dbReference type="GO" id="GO:0016042">
    <property type="term" value="P:lipid catabolic process"/>
    <property type="evidence" value="ECO:0007669"/>
    <property type="project" value="UniProtKB-KW"/>
</dbReference>
<dbReference type="GO" id="GO:0006644">
    <property type="term" value="P:phospholipid metabolic process"/>
    <property type="evidence" value="ECO:0007669"/>
    <property type="project" value="InterPro"/>
</dbReference>
<dbReference type="Gene3D" id="1.20.90.10">
    <property type="entry name" value="Phospholipase A2 domain"/>
    <property type="match status" value="1"/>
</dbReference>
<dbReference type="InterPro" id="IPR001211">
    <property type="entry name" value="PLipase_A2"/>
</dbReference>
<dbReference type="InterPro" id="IPR033112">
    <property type="entry name" value="PLipase_A2_Asp_AS"/>
</dbReference>
<dbReference type="InterPro" id="IPR016090">
    <property type="entry name" value="PLipase_A2_dom"/>
</dbReference>
<dbReference type="InterPro" id="IPR036444">
    <property type="entry name" value="PLipase_A2_dom_sf"/>
</dbReference>
<dbReference type="InterPro" id="IPR033113">
    <property type="entry name" value="PLipase_A2_His_AS"/>
</dbReference>
<dbReference type="PANTHER" id="PTHR11716:SF101">
    <property type="entry name" value="BASIC PHOSPHOLIPASE A2 PA-11-LIKE"/>
    <property type="match status" value="1"/>
</dbReference>
<dbReference type="PANTHER" id="PTHR11716">
    <property type="entry name" value="PHOSPHOLIPASE A2 FAMILY MEMBER"/>
    <property type="match status" value="1"/>
</dbReference>
<dbReference type="Pfam" id="PF00068">
    <property type="entry name" value="Phospholip_A2_1"/>
    <property type="match status" value="1"/>
</dbReference>
<dbReference type="SMART" id="SM00085">
    <property type="entry name" value="PA2c"/>
    <property type="match status" value="1"/>
</dbReference>
<dbReference type="SUPFAM" id="SSF48619">
    <property type="entry name" value="Phospholipase A2, PLA2"/>
    <property type="match status" value="1"/>
</dbReference>
<dbReference type="PROSITE" id="PS00119">
    <property type="entry name" value="PA2_ASP"/>
    <property type="match status" value="1"/>
</dbReference>
<dbReference type="PROSITE" id="PS00118">
    <property type="entry name" value="PA2_HIS"/>
    <property type="match status" value="1"/>
</dbReference>
<evidence type="ECO:0000250" key="1"/>
<evidence type="ECO:0000250" key="2">
    <source>
        <dbReference type="UniProtKB" id="O42191"/>
    </source>
</evidence>
<evidence type="ECO:0000250" key="3">
    <source>
        <dbReference type="UniProtKB" id="P14418"/>
    </source>
</evidence>
<evidence type="ECO:0000255" key="4">
    <source>
        <dbReference type="PROSITE-ProRule" id="PRU10035"/>
    </source>
</evidence>
<evidence type="ECO:0000255" key="5">
    <source>
        <dbReference type="PROSITE-ProRule" id="PRU10036"/>
    </source>
</evidence>
<evidence type="ECO:0000269" key="6">
    <source>
    </source>
</evidence>
<evidence type="ECO:0000303" key="7">
    <source>
    </source>
</evidence>
<evidence type="ECO:0000305" key="8"/>
<sequence>NLWQFGRENQEVMGQHLPFHYLSYGCYCGWGGIEPKCCYVHDCCYGKLDLYTYSKETGDLVCGGDDPCQKQLCECDRVAALCFQDNKDTYDQKPYNAENCQEASEAC</sequence>
<feature type="chain" id="PRO_0000161620" description="Acidic phospholipase A2 2">
    <location>
        <begin position="1"/>
        <end position="107"/>
    </location>
</feature>
<feature type="active site" evidence="3">
    <location>
        <position position="41"/>
    </location>
</feature>
<feature type="active site" evidence="3">
    <location>
        <position position="76"/>
    </location>
</feature>
<feature type="binding site" evidence="1">
    <location>
        <position position="27"/>
    </location>
    <ligand>
        <name>Ca(2+)</name>
        <dbReference type="ChEBI" id="CHEBI:29108"/>
    </ligand>
</feature>
<feature type="binding site" evidence="1">
    <location>
        <position position="29"/>
    </location>
    <ligand>
        <name>Ca(2+)</name>
        <dbReference type="ChEBI" id="CHEBI:29108"/>
    </ligand>
</feature>
<feature type="binding site" evidence="1">
    <location>
        <position position="31"/>
    </location>
    <ligand>
        <name>Ca(2+)</name>
        <dbReference type="ChEBI" id="CHEBI:29108"/>
    </ligand>
</feature>
<feature type="binding site" evidence="3">
    <location>
        <position position="42"/>
    </location>
    <ligand>
        <name>Ca(2+)</name>
        <dbReference type="ChEBI" id="CHEBI:29108"/>
    </ligand>
</feature>
<feature type="disulfide bond" evidence="3">
    <location>
        <begin position="26"/>
        <end position="100"/>
    </location>
</feature>
<feature type="disulfide bond" evidence="3">
    <location>
        <begin position="28"/>
        <end position="38"/>
    </location>
</feature>
<feature type="disulfide bond" evidence="3">
    <location>
        <begin position="37"/>
        <end position="82"/>
    </location>
</feature>
<feature type="disulfide bond" evidence="3">
    <location>
        <begin position="43"/>
        <end position="107"/>
    </location>
</feature>
<feature type="disulfide bond" evidence="3">
    <location>
        <begin position="44"/>
        <end position="75"/>
    </location>
</feature>
<feature type="disulfide bond" evidence="3">
    <location>
        <begin position="62"/>
        <end position="73"/>
    </location>
</feature>
<feature type="disulfide bond" evidence="3">
    <location>
        <begin status="unknown"/>
        <end position="68"/>
    </location>
</feature>
<feature type="unsure residue" description="L or I" evidence="6">
    <location>
        <position position="2"/>
    </location>
</feature>
<feature type="unsure residue" description="Q or K" evidence="6">
    <location>
        <position position="4"/>
    </location>
</feature>
<feature type="unsure residue" description="Q or K" evidence="6">
    <location>
        <position position="10"/>
    </location>
</feature>
<feature type="unsure residue" description="Q or K" evidence="6">
    <location>
        <position position="15"/>
    </location>
</feature>
<feature type="unsure residue" description="L or I" evidence="6">
    <location>
        <position position="17"/>
    </location>
</feature>
<feature type="unsure residue" description="L or I" evidence="6">
    <location>
        <position position="22"/>
    </location>
</feature>
<feature type="unsure residue" description="I or L" evidence="6">
    <location>
        <position position="33"/>
    </location>
</feature>
<feature type="unsure residue" description="L or I" evidence="6">
    <location>
        <position position="48"/>
    </location>
</feature>
<feature type="unsure residue" description="L or I" evidence="6">
    <location>
        <position position="50"/>
    </location>
</feature>
<feature type="unsure residue" description="L or I" evidence="6">
    <location>
        <position position="60"/>
    </location>
</feature>
<feature type="unsure residue" description="Q or K" evidence="6">
    <location>
        <position position="69"/>
    </location>
</feature>
<feature type="unsure residue" description="Q or K" evidence="6">
    <location>
        <position position="71"/>
    </location>
</feature>
<feature type="unsure residue" description="L or I" evidence="6">
    <location>
        <position position="72"/>
    </location>
</feature>
<feature type="unsure residue" description="L or I" evidence="6">
    <location>
        <position position="81"/>
    </location>
</feature>
<feature type="unsure residue" description="Q or K" evidence="6">
    <location>
        <position position="84"/>
    </location>
</feature>
<feature type="unsure residue" description="Q or K" evidence="6">
    <location>
        <position position="92"/>
    </location>
</feature>
<feature type="unsure residue" description="Q or K" evidence="6">
    <location>
        <position position="101"/>
    </location>
</feature>
<feature type="non-consecutive residues" evidence="7">
    <location>
        <begin position="36"/>
        <end position="37"/>
    </location>
</feature>
<feature type="non-consecutive residues" evidence="7">
    <location>
        <begin position="47"/>
        <end position="48"/>
    </location>
</feature>
<feature type="non-consecutive residues" evidence="7">
    <location>
        <begin position="93"/>
        <end position="94"/>
    </location>
</feature>
<keyword id="KW-0106">Calcium</keyword>
<keyword id="KW-0903">Direct protein sequencing</keyword>
<keyword id="KW-1015">Disulfide bond</keyword>
<keyword id="KW-0378">Hydrolase</keyword>
<keyword id="KW-0442">Lipid degradation</keyword>
<keyword id="KW-0443">Lipid metabolism</keyword>
<keyword id="KW-0479">Metal-binding</keyword>
<keyword id="KW-0964">Secreted</keyword>
<keyword id="KW-0800">Toxin</keyword>
<comment type="function">
    <text evidence="1">PLA2 catalyzes the calcium-dependent hydrolysis of the 2-acyl groups in 3-sn-phosphoglycerides.</text>
</comment>
<comment type="catalytic activity">
    <reaction evidence="2 4 5">
        <text>a 1,2-diacyl-sn-glycero-3-phosphocholine + H2O = a 1-acyl-sn-glycero-3-phosphocholine + a fatty acid + H(+)</text>
        <dbReference type="Rhea" id="RHEA:15801"/>
        <dbReference type="ChEBI" id="CHEBI:15377"/>
        <dbReference type="ChEBI" id="CHEBI:15378"/>
        <dbReference type="ChEBI" id="CHEBI:28868"/>
        <dbReference type="ChEBI" id="CHEBI:57643"/>
        <dbReference type="ChEBI" id="CHEBI:58168"/>
        <dbReference type="EC" id="3.1.1.4"/>
    </reaction>
</comment>
<comment type="cofactor">
    <cofactor evidence="1">
        <name>Ca(2+)</name>
        <dbReference type="ChEBI" id="CHEBI:29108"/>
    </cofactor>
    <text evidence="1">Binds 1 Ca(2+) ion.</text>
</comment>
<comment type="subcellular location">
    <subcellularLocation>
        <location evidence="6">Secreted</location>
    </subcellularLocation>
</comment>
<comment type="tissue specificity">
    <text evidence="6">Expressed by the venom gland.</text>
</comment>
<comment type="mass spectrometry"/>
<comment type="similarity">
    <text evidence="8">Belongs to the phospholipase A2 family. Group II subfamily. D49 sub-subfamily.</text>
</comment>
<protein>
    <recommendedName>
        <fullName>Acidic phospholipase A2 2</fullName>
        <shortName>svPLA2</shortName>
        <ecNumber>3.1.1.4</ecNumber>
    </recommendedName>
    <alternativeName>
        <fullName>BinTX-II</fullName>
    </alternativeName>
    <alternativeName>
        <fullName>Phosphatidylcholine 2-acylhydrolase</fullName>
    </alternativeName>
</protein>
<organism>
    <name type="scientific">Bothrops insularis</name>
    <name type="common">Golden lancehead</name>
    <name type="synonym">Lachesis insularis</name>
    <dbReference type="NCBI Taxonomy" id="8723"/>
    <lineage>
        <taxon>Eukaryota</taxon>
        <taxon>Metazoa</taxon>
        <taxon>Chordata</taxon>
        <taxon>Craniata</taxon>
        <taxon>Vertebrata</taxon>
        <taxon>Euteleostomi</taxon>
        <taxon>Lepidosauria</taxon>
        <taxon>Squamata</taxon>
        <taxon>Bifurcata</taxon>
        <taxon>Unidentata</taxon>
        <taxon>Episquamata</taxon>
        <taxon>Toxicofera</taxon>
        <taxon>Serpentes</taxon>
        <taxon>Colubroidea</taxon>
        <taxon>Viperidae</taxon>
        <taxon>Crotalinae</taxon>
        <taxon>Bothrops</taxon>
    </lineage>
</organism>
<name>PA2A2_BOTIN</name>
<accession>P84397</accession>
<reference evidence="8" key="1">
    <citation type="journal article" date="2006" name="Biochimie">
        <title>Purification, sequencing and structural analysis of two acidic phospholipases A2 from the venom of Bothrops insularis (jararaca ilhoa).</title>
        <authorList>
            <person name="Cogo J.C."/>
            <person name="Lilla S."/>
            <person name="Souza G.H.M.F."/>
            <person name="Hyslop S."/>
            <person name="de Nucci G."/>
        </authorList>
    </citation>
    <scope>PROTEIN SEQUENCE</scope>
    <scope>SUBCELLULAR LOCATION</scope>
    <scope>TISSUE SPECIFICITY</scope>
    <scope>MASS SPECTROMETRY</scope>
    <source>
        <tissue evidence="6">Venom</tissue>
    </source>
</reference>